<organism>
    <name type="scientific">Chlorobium phaeobacteroides (strain BS1)</name>
    <dbReference type="NCBI Taxonomy" id="331678"/>
    <lineage>
        <taxon>Bacteria</taxon>
        <taxon>Pseudomonadati</taxon>
        <taxon>Chlorobiota</taxon>
        <taxon>Chlorobiia</taxon>
        <taxon>Chlorobiales</taxon>
        <taxon>Chlorobiaceae</taxon>
        <taxon>Chlorobium/Pelodictyon group</taxon>
        <taxon>Chlorobium</taxon>
    </lineage>
</organism>
<dbReference type="EC" id="7.1.1.-" evidence="1"/>
<dbReference type="EMBL" id="CP001101">
    <property type="protein sequence ID" value="ACE04527.1"/>
    <property type="molecule type" value="Genomic_DNA"/>
</dbReference>
<dbReference type="SMR" id="B3EKA0"/>
<dbReference type="STRING" id="331678.Cphamn1_1606"/>
<dbReference type="KEGG" id="cpb:Cphamn1_1606"/>
<dbReference type="eggNOG" id="COG0377">
    <property type="taxonomic scope" value="Bacteria"/>
</dbReference>
<dbReference type="HOGENOM" id="CLU_055737_7_3_10"/>
<dbReference type="OrthoDB" id="9786737at2"/>
<dbReference type="GO" id="GO:0005886">
    <property type="term" value="C:plasma membrane"/>
    <property type="evidence" value="ECO:0007669"/>
    <property type="project" value="UniProtKB-SubCell"/>
</dbReference>
<dbReference type="GO" id="GO:0045271">
    <property type="term" value="C:respiratory chain complex I"/>
    <property type="evidence" value="ECO:0007669"/>
    <property type="project" value="TreeGrafter"/>
</dbReference>
<dbReference type="GO" id="GO:0051539">
    <property type="term" value="F:4 iron, 4 sulfur cluster binding"/>
    <property type="evidence" value="ECO:0007669"/>
    <property type="project" value="UniProtKB-KW"/>
</dbReference>
<dbReference type="GO" id="GO:0005506">
    <property type="term" value="F:iron ion binding"/>
    <property type="evidence" value="ECO:0007669"/>
    <property type="project" value="UniProtKB-UniRule"/>
</dbReference>
<dbReference type="GO" id="GO:0008137">
    <property type="term" value="F:NADH dehydrogenase (ubiquinone) activity"/>
    <property type="evidence" value="ECO:0007669"/>
    <property type="project" value="InterPro"/>
</dbReference>
<dbReference type="GO" id="GO:0050136">
    <property type="term" value="F:NADH:ubiquinone reductase (non-electrogenic) activity"/>
    <property type="evidence" value="ECO:0007669"/>
    <property type="project" value="UniProtKB-UniRule"/>
</dbReference>
<dbReference type="GO" id="GO:0048038">
    <property type="term" value="F:quinone binding"/>
    <property type="evidence" value="ECO:0007669"/>
    <property type="project" value="UniProtKB-KW"/>
</dbReference>
<dbReference type="GO" id="GO:0009060">
    <property type="term" value="P:aerobic respiration"/>
    <property type="evidence" value="ECO:0007669"/>
    <property type="project" value="TreeGrafter"/>
</dbReference>
<dbReference type="GO" id="GO:0015990">
    <property type="term" value="P:electron transport coupled proton transport"/>
    <property type="evidence" value="ECO:0007669"/>
    <property type="project" value="TreeGrafter"/>
</dbReference>
<dbReference type="FunFam" id="3.40.50.12280:FF:000002">
    <property type="entry name" value="NADH-quinone oxidoreductase subunit B"/>
    <property type="match status" value="1"/>
</dbReference>
<dbReference type="Gene3D" id="3.40.50.12280">
    <property type="match status" value="1"/>
</dbReference>
<dbReference type="HAMAP" id="MF_01356">
    <property type="entry name" value="NDH1_NuoB"/>
    <property type="match status" value="1"/>
</dbReference>
<dbReference type="InterPro" id="IPR006137">
    <property type="entry name" value="NADH_UbQ_OxRdtase-like_20kDa"/>
</dbReference>
<dbReference type="InterPro" id="IPR006138">
    <property type="entry name" value="NADH_UQ_OxRdtase_20Kd_su"/>
</dbReference>
<dbReference type="NCBIfam" id="TIGR01957">
    <property type="entry name" value="nuoB_fam"/>
    <property type="match status" value="1"/>
</dbReference>
<dbReference type="NCBIfam" id="NF005012">
    <property type="entry name" value="PRK06411.1"/>
    <property type="match status" value="1"/>
</dbReference>
<dbReference type="NCBIfam" id="NF011388">
    <property type="entry name" value="PRK14813.1"/>
    <property type="match status" value="1"/>
</dbReference>
<dbReference type="PANTHER" id="PTHR11995">
    <property type="entry name" value="NADH DEHYDROGENASE"/>
    <property type="match status" value="1"/>
</dbReference>
<dbReference type="PANTHER" id="PTHR11995:SF33">
    <property type="entry name" value="NADH-QUINONE OXIDOREDUCTASE SUBUNIT B 2"/>
    <property type="match status" value="1"/>
</dbReference>
<dbReference type="Pfam" id="PF01058">
    <property type="entry name" value="Oxidored_q6"/>
    <property type="match status" value="1"/>
</dbReference>
<dbReference type="SUPFAM" id="SSF56770">
    <property type="entry name" value="HydA/Nqo6-like"/>
    <property type="match status" value="1"/>
</dbReference>
<dbReference type="PROSITE" id="PS01150">
    <property type="entry name" value="COMPLEX1_20K"/>
    <property type="match status" value="1"/>
</dbReference>
<feature type="chain" id="PRO_0000376171" description="NADH-quinone oxidoreductase subunit B">
    <location>
        <begin position="1"/>
        <end position="190"/>
    </location>
</feature>
<feature type="binding site" evidence="1">
    <location>
        <position position="39"/>
    </location>
    <ligand>
        <name>[4Fe-4S] cluster</name>
        <dbReference type="ChEBI" id="CHEBI:49883"/>
    </ligand>
</feature>
<feature type="binding site" evidence="1">
    <location>
        <position position="40"/>
    </location>
    <ligand>
        <name>[4Fe-4S] cluster</name>
        <dbReference type="ChEBI" id="CHEBI:49883"/>
    </ligand>
</feature>
<feature type="binding site" evidence="1">
    <location>
        <position position="104"/>
    </location>
    <ligand>
        <name>[4Fe-4S] cluster</name>
        <dbReference type="ChEBI" id="CHEBI:49883"/>
    </ligand>
</feature>
<feature type="binding site" evidence="1">
    <location>
        <position position="135"/>
    </location>
    <ligand>
        <name>[4Fe-4S] cluster</name>
        <dbReference type="ChEBI" id="CHEBI:49883"/>
    </ligand>
</feature>
<reference key="1">
    <citation type="submission" date="2008-06" db="EMBL/GenBank/DDBJ databases">
        <title>Complete sequence of Chlorobium phaeobacteroides BS1.</title>
        <authorList>
            <consortium name="US DOE Joint Genome Institute"/>
            <person name="Lucas S."/>
            <person name="Copeland A."/>
            <person name="Lapidus A."/>
            <person name="Glavina del Rio T."/>
            <person name="Dalin E."/>
            <person name="Tice H."/>
            <person name="Bruce D."/>
            <person name="Goodwin L."/>
            <person name="Pitluck S."/>
            <person name="Schmutz J."/>
            <person name="Larimer F."/>
            <person name="Land M."/>
            <person name="Hauser L."/>
            <person name="Kyrpides N."/>
            <person name="Ovchinnikova G."/>
            <person name="Li T."/>
            <person name="Liu Z."/>
            <person name="Zhao F."/>
            <person name="Overmann J."/>
            <person name="Bryant D.A."/>
            <person name="Richardson P."/>
        </authorList>
    </citation>
    <scope>NUCLEOTIDE SEQUENCE [LARGE SCALE GENOMIC DNA]</scope>
    <source>
        <strain>BS1</strain>
    </source>
</reference>
<accession>B3EKA0</accession>
<comment type="function">
    <text evidence="1">NDH-1 shuttles electrons from NADH, via FMN and iron-sulfur (Fe-S) centers, to quinones in the respiratory chain. The immediate electron acceptor for the enzyme in this species is believed to be a menaquinone. Couples the redox reaction to proton translocation (for every two electrons transferred, four hydrogen ions are translocated across the cytoplasmic membrane), and thus conserves the redox energy in a proton gradient.</text>
</comment>
<comment type="catalytic activity">
    <reaction evidence="1">
        <text>a quinone + NADH + 5 H(+)(in) = a quinol + NAD(+) + 4 H(+)(out)</text>
        <dbReference type="Rhea" id="RHEA:57888"/>
        <dbReference type="ChEBI" id="CHEBI:15378"/>
        <dbReference type="ChEBI" id="CHEBI:24646"/>
        <dbReference type="ChEBI" id="CHEBI:57540"/>
        <dbReference type="ChEBI" id="CHEBI:57945"/>
        <dbReference type="ChEBI" id="CHEBI:132124"/>
    </reaction>
</comment>
<comment type="cofactor">
    <cofactor evidence="1">
        <name>[4Fe-4S] cluster</name>
        <dbReference type="ChEBI" id="CHEBI:49883"/>
    </cofactor>
    <text evidence="1">Binds 1 [4Fe-4S] cluster.</text>
</comment>
<comment type="subunit">
    <text evidence="1">NDH-1 is composed of 14 different subunits. Subunits NuoB, C, D, E, F, and G constitute the peripheral sector of the complex.</text>
</comment>
<comment type="subcellular location">
    <subcellularLocation>
        <location evidence="1">Cell inner membrane</location>
        <topology evidence="1">Peripheral membrane protein</topology>
        <orientation evidence="1">Cytoplasmic side</orientation>
    </subcellularLocation>
</comment>
<comment type="similarity">
    <text evidence="1">Belongs to the complex I 20 kDa subunit family.</text>
</comment>
<proteinExistence type="inferred from homology"/>
<keyword id="KW-0004">4Fe-4S</keyword>
<keyword id="KW-0997">Cell inner membrane</keyword>
<keyword id="KW-1003">Cell membrane</keyword>
<keyword id="KW-0408">Iron</keyword>
<keyword id="KW-0411">Iron-sulfur</keyword>
<keyword id="KW-0472">Membrane</keyword>
<keyword id="KW-0479">Metal-binding</keyword>
<keyword id="KW-0520">NAD</keyword>
<keyword id="KW-0874">Quinone</keyword>
<keyword id="KW-1278">Translocase</keyword>
<keyword id="KW-0813">Transport</keyword>
<sequence length="190" mass="21084">MGLLDAKISNHNVLVTSVDNVLNWARLSSLWPMGFGLACCAIEMMATNASNYDLERFGIFPRSSPRQSDLMIVAGTVTMKMAERVIRLYEQMPEPRYVLSMGSCSNCGGPYWKHGYHVLKGVDRIIPVDVYVPGCPPRPEALIGGLMKVQELIRMEQIGISRVEALKKLEEKNIDPGQLIEDARKGAMAS</sequence>
<gene>
    <name evidence="1" type="primary">nuoB</name>
    <name type="ordered locus">Cphamn1_1606</name>
</gene>
<protein>
    <recommendedName>
        <fullName evidence="1">NADH-quinone oxidoreductase subunit B</fullName>
        <ecNumber evidence="1">7.1.1.-</ecNumber>
    </recommendedName>
    <alternativeName>
        <fullName evidence="1">NADH dehydrogenase I subunit B</fullName>
    </alternativeName>
    <alternativeName>
        <fullName evidence="1">NDH-1 subunit B</fullName>
    </alternativeName>
</protein>
<evidence type="ECO:0000255" key="1">
    <source>
        <dbReference type="HAMAP-Rule" id="MF_01356"/>
    </source>
</evidence>
<name>NUOB_CHLPB</name>